<sequence>MGGGHSALSGRSLDTFEKIRLRPNGKKKYQIKHLIWAGKEMERFGLHEKLLETKEGCQKIIEVLTPLEPTGSEGLKALFNLCCVIWCIHAEQKVKDTEEAVVTVKQHYHLVDKNEKAAKKKNETTAPPGGESRNYPVVNQNNAWVHQPLSPRTLNAWVKCVEEKRWGAEVVPMFQALSEGCLSYDVNQMLNVIGDHQGALQILKEVINEEAAEWDRTHRPPAGPLPAGQLRDPTGSDIAGTTSSIQEQIEWTFNANPRIDVGAQYRKWVILGLQKVVQMYNPQKVLDIRQGPKEPFQDYVDRFYKALRAEQAPQDVKNWMTQTLLIQNANPDCKLILKGLGMNPTLEEMLIACQGVGGPQHKAKLMVEMMSNGQNMVQVGPQKKGPRGPLKCFNCGKFGHMQRECKAPRQIKCFKCGKIGHMAKDCKNGQANFLGYGHWGGAKPRNFVQYRGDTVGLEPTAPPMETAYDPAKKLLQQYAEKGQRLREEREQTRKQKEKEVEDVSLSSLFGGDQ</sequence>
<proteinExistence type="evidence at protein level"/>
<keyword id="KW-0002">3D-structure</keyword>
<keyword id="KW-0167">Capsid protein</keyword>
<keyword id="KW-1032">Host cell membrane</keyword>
<keyword id="KW-1035">Host cytoplasm</keyword>
<keyword id="KW-1043">Host membrane</keyword>
<keyword id="KW-1048">Host nucleus</keyword>
<keyword id="KW-0945">Host-virus interaction</keyword>
<keyword id="KW-0449">Lipoprotein</keyword>
<keyword id="KW-0472">Membrane</keyword>
<keyword id="KW-0479">Metal-binding</keyword>
<keyword id="KW-0519">Myristate</keyword>
<keyword id="KW-0597">Phosphoprotein</keyword>
<keyword id="KW-0677">Repeat</keyword>
<keyword id="KW-0688">Ribosomal frameshifting</keyword>
<keyword id="KW-0694">RNA-binding</keyword>
<keyword id="KW-1198">Viral budding</keyword>
<keyword id="KW-1187">Viral budding via the host ESCRT complexes</keyword>
<keyword id="KW-0543">Viral nucleoprotein</keyword>
<keyword id="KW-1188">Viral release from host cell</keyword>
<keyword id="KW-0946">Virion</keyword>
<keyword id="KW-0862">Zinc</keyword>
<keyword id="KW-0863">Zinc-finger</keyword>
<accession>Q02843</accession>
<protein>
    <recommendedName>
        <fullName>Gag polyprotein</fullName>
    </recommendedName>
    <alternativeName>
        <fullName>Pr55Gag</fullName>
    </alternativeName>
    <component>
        <recommendedName>
            <fullName>Matrix protein p17</fullName>
            <shortName>MA</shortName>
        </recommendedName>
    </component>
    <component>
        <recommendedName>
            <fullName>Capsid protein p24</fullName>
            <shortName>CA</shortName>
        </recommendedName>
    </component>
    <component>
        <recommendedName>
            <fullName>Spacer peptide p2</fullName>
        </recommendedName>
    </component>
    <component>
        <recommendedName>
            <fullName>Nucleocapsid protein p7</fullName>
            <shortName>NC</shortName>
        </recommendedName>
    </component>
    <component>
        <recommendedName>
            <fullName>Spacer peptide p1</fullName>
        </recommendedName>
    </component>
    <component>
        <recommendedName>
            <fullName>p6-gag</fullName>
        </recommendedName>
    </component>
</protein>
<dbReference type="EMBL" id="M66437">
    <property type="protein sequence ID" value="AAA91922.1"/>
    <property type="molecule type" value="Genomic_DNA"/>
</dbReference>
<dbReference type="EMBL" id="M58410">
    <property type="protein sequence ID" value="AAA47588.1"/>
    <property type="molecule type" value="Genomic_RNA"/>
</dbReference>
<dbReference type="PDB" id="2XS8">
    <property type="method" value="X-ray"/>
    <property type="resolution" value="2.50 A"/>
    <property type="chains" value="B=467-481"/>
</dbReference>
<dbReference type="PDBsum" id="2XS8"/>
<dbReference type="SMR" id="Q02843"/>
<dbReference type="BioGRID" id="3509206">
    <property type="interactions" value="3"/>
</dbReference>
<dbReference type="EvolutionaryTrace" id="Q02843"/>
<dbReference type="PRO" id="PR:Q02843"/>
<dbReference type="Proteomes" id="UP000201112">
    <property type="component" value="Segment"/>
</dbReference>
<dbReference type="Proteomes" id="UP000257419">
    <property type="component" value="Segment"/>
</dbReference>
<dbReference type="GO" id="GO:0030430">
    <property type="term" value="C:host cell cytoplasm"/>
    <property type="evidence" value="ECO:0007669"/>
    <property type="project" value="UniProtKB-SubCell"/>
</dbReference>
<dbReference type="GO" id="GO:0042025">
    <property type="term" value="C:host cell nucleus"/>
    <property type="evidence" value="ECO:0007669"/>
    <property type="project" value="UniProtKB-SubCell"/>
</dbReference>
<dbReference type="GO" id="GO:0020002">
    <property type="term" value="C:host cell plasma membrane"/>
    <property type="evidence" value="ECO:0007669"/>
    <property type="project" value="UniProtKB-SubCell"/>
</dbReference>
<dbReference type="GO" id="GO:0016020">
    <property type="term" value="C:membrane"/>
    <property type="evidence" value="ECO:0007669"/>
    <property type="project" value="UniProtKB-KW"/>
</dbReference>
<dbReference type="GO" id="GO:0019013">
    <property type="term" value="C:viral nucleocapsid"/>
    <property type="evidence" value="ECO:0007669"/>
    <property type="project" value="UniProtKB-KW"/>
</dbReference>
<dbReference type="GO" id="GO:0003723">
    <property type="term" value="F:RNA binding"/>
    <property type="evidence" value="ECO:0007669"/>
    <property type="project" value="UniProtKB-KW"/>
</dbReference>
<dbReference type="GO" id="GO:0005198">
    <property type="term" value="F:structural molecule activity"/>
    <property type="evidence" value="ECO:0007669"/>
    <property type="project" value="InterPro"/>
</dbReference>
<dbReference type="GO" id="GO:0008270">
    <property type="term" value="F:zinc ion binding"/>
    <property type="evidence" value="ECO:0007669"/>
    <property type="project" value="UniProtKB-KW"/>
</dbReference>
<dbReference type="GO" id="GO:0039702">
    <property type="term" value="P:viral budding via host ESCRT complex"/>
    <property type="evidence" value="ECO:0007669"/>
    <property type="project" value="UniProtKB-KW"/>
</dbReference>
<dbReference type="GO" id="GO:0075523">
    <property type="term" value="P:viral translational frameshifting"/>
    <property type="evidence" value="ECO:0007669"/>
    <property type="project" value="UniProtKB-KW"/>
</dbReference>
<dbReference type="Gene3D" id="1.10.1200.30">
    <property type="match status" value="1"/>
</dbReference>
<dbReference type="Gene3D" id="1.10.375.10">
    <property type="entry name" value="Human Immunodeficiency Virus Type 1 Capsid Protein"/>
    <property type="match status" value="1"/>
</dbReference>
<dbReference type="Gene3D" id="1.10.150.90">
    <property type="entry name" value="Immunodeficiency lentiviruses, gag gene matrix protein p17"/>
    <property type="match status" value="1"/>
</dbReference>
<dbReference type="Gene3D" id="1.20.5.760">
    <property type="entry name" value="Single helix bin"/>
    <property type="match status" value="1"/>
</dbReference>
<dbReference type="Gene3D" id="4.10.60.10">
    <property type="entry name" value="Zinc finger, CCHC-type"/>
    <property type="match status" value="1"/>
</dbReference>
<dbReference type="InterPro" id="IPR045345">
    <property type="entry name" value="Gag_p24_C"/>
</dbReference>
<dbReference type="InterPro" id="IPR000071">
    <property type="entry name" value="Lentvrl_matrix_N"/>
</dbReference>
<dbReference type="InterPro" id="IPR012344">
    <property type="entry name" value="Matrix_HIV/RSV_N"/>
</dbReference>
<dbReference type="InterPro" id="IPR050195">
    <property type="entry name" value="Primate_lentivir_Gag_pol-like"/>
</dbReference>
<dbReference type="InterPro" id="IPR008916">
    <property type="entry name" value="Retrov_capsid_C"/>
</dbReference>
<dbReference type="InterPro" id="IPR008919">
    <property type="entry name" value="Retrov_capsid_N"/>
</dbReference>
<dbReference type="InterPro" id="IPR010999">
    <property type="entry name" value="Retrovr_matrix"/>
</dbReference>
<dbReference type="InterPro" id="IPR001878">
    <property type="entry name" value="Znf_CCHC"/>
</dbReference>
<dbReference type="InterPro" id="IPR036875">
    <property type="entry name" value="Znf_CCHC_sf"/>
</dbReference>
<dbReference type="PANTHER" id="PTHR40389">
    <property type="entry name" value="ENDOGENOUS RETROVIRUS GROUP K MEMBER 24 GAG POLYPROTEIN-RELATED"/>
    <property type="match status" value="1"/>
</dbReference>
<dbReference type="PANTHER" id="PTHR40389:SF2">
    <property type="entry name" value="ENDOGENOUS RETROVIRUS GROUP K MEMBER 24 GAG POLYPROTEIN-RELATED"/>
    <property type="match status" value="1"/>
</dbReference>
<dbReference type="Pfam" id="PF00540">
    <property type="entry name" value="Gag_p17"/>
    <property type="match status" value="1"/>
</dbReference>
<dbReference type="Pfam" id="PF00607">
    <property type="entry name" value="Gag_p24"/>
    <property type="match status" value="1"/>
</dbReference>
<dbReference type="Pfam" id="PF19317">
    <property type="entry name" value="Gag_p24_C"/>
    <property type="match status" value="1"/>
</dbReference>
<dbReference type="Pfam" id="PF00098">
    <property type="entry name" value="zf-CCHC"/>
    <property type="match status" value="2"/>
</dbReference>
<dbReference type="PRINTS" id="PR00234">
    <property type="entry name" value="HIV1MATRIX"/>
</dbReference>
<dbReference type="SMART" id="SM00343">
    <property type="entry name" value="ZnF_C2HC"/>
    <property type="match status" value="2"/>
</dbReference>
<dbReference type="SUPFAM" id="SSF47836">
    <property type="entry name" value="Retroviral matrix proteins"/>
    <property type="match status" value="1"/>
</dbReference>
<dbReference type="SUPFAM" id="SSF47353">
    <property type="entry name" value="Retrovirus capsid dimerization domain-like"/>
    <property type="match status" value="1"/>
</dbReference>
<dbReference type="SUPFAM" id="SSF47943">
    <property type="entry name" value="Retrovirus capsid protein, N-terminal core domain"/>
    <property type="match status" value="1"/>
</dbReference>
<dbReference type="SUPFAM" id="SSF57756">
    <property type="entry name" value="Retrovirus zinc finger-like domains"/>
    <property type="match status" value="1"/>
</dbReference>
<dbReference type="PROSITE" id="PS50158">
    <property type="entry name" value="ZF_CCHC"/>
    <property type="match status" value="2"/>
</dbReference>
<evidence type="ECO:0000250" key="1"/>
<evidence type="ECO:0000250" key="2">
    <source>
        <dbReference type="UniProtKB" id="P04591"/>
    </source>
</evidence>
<evidence type="ECO:0000250" key="3">
    <source>
        <dbReference type="UniProtKB" id="P05893"/>
    </source>
</evidence>
<evidence type="ECO:0000250" key="4">
    <source>
        <dbReference type="UniProtKB" id="P12493"/>
    </source>
</evidence>
<evidence type="ECO:0000255" key="5">
    <source>
        <dbReference type="PROSITE-ProRule" id="PRU00047"/>
    </source>
</evidence>
<evidence type="ECO:0000256" key="6">
    <source>
        <dbReference type="SAM" id="MobiDB-lite"/>
    </source>
</evidence>
<evidence type="ECO:0000305" key="7"/>
<evidence type="ECO:0007829" key="8">
    <source>
        <dbReference type="PDB" id="2XS8"/>
    </source>
</evidence>
<organismHost>
    <name type="scientific">Cercopithecidae</name>
    <name type="common">Old World monkeys</name>
    <dbReference type="NCBI Taxonomy" id="9527"/>
</organismHost>
<reference key="1">
    <citation type="journal article" date="1991" name="Virology">
        <title>A highly divergent proviral DNA clone of SIV from a distinct species of African green monkey.</title>
        <authorList>
            <person name="Fomsgaard A."/>
            <person name="Hirsch V.M."/>
            <person name="Allan J.S."/>
            <person name="Johnson P.R."/>
        </authorList>
    </citation>
    <scope>NUCLEOTIDE SEQUENCE [GENOMIC DNA]</scope>
</reference>
<name>GAG_SIVG1</name>
<comment type="function">
    <text evidence="1">Matrix protein p17 targets Gag and Gag-Pol polyproteins to the plasma membrane via a multipartite membrane binding signal, that includes its myristoylated N-terminus. Also mediates nuclear localization of the preintegration complex. Implicated in the release from host cell mediated by Vpu (By similarity).</text>
</comment>
<comment type="function">
    <text evidence="1">Capsid protein p24 forms the conical core of the virus that encapsulates the genomic RNA-nucleocapsid complex.</text>
</comment>
<comment type="function">
    <text evidence="1">Nucleocapsid protein p7 encapsulates and protects viral dimeric unspliced (genomic) RNA. Binds these RNAs through its zinc fingers (By similarity).</text>
</comment>
<comment type="function">
    <text evidence="1">p6-gag plays a role in budding of the assembled particle by interacting with the host class E VPS proteins TSG101 and PDCD6IP/AIP1.</text>
</comment>
<comment type="subunit">
    <molecule>Matrix protein p17</molecule>
    <text evidence="2 4">Homotrimer. Interacts with gp41 (via C-terminus).</text>
</comment>
<comment type="subunit">
    <molecule>p6-gag</molecule>
    <text evidence="4">Interacts with host TSG101 (By similarity).</text>
</comment>
<comment type="subcellular location">
    <molecule>Matrix protein p17</molecule>
    <subcellularLocation>
        <location evidence="7">Virion</location>
    </subcellularLocation>
    <subcellularLocation>
        <location evidence="1">Host nucleus</location>
    </subcellularLocation>
    <subcellularLocation>
        <location evidence="1">Host cytoplasm</location>
    </subcellularLocation>
    <subcellularLocation>
        <location evidence="7">Host cell membrane</location>
        <topology evidence="7">Lipid-anchor</topology>
    </subcellularLocation>
    <text evidence="1">Following virus entry, the nuclear localization signal (NLS) of the matrix protein participates with Vpr to the nuclear localization of the viral genome. During virus production, the nuclear export activity of the matrix protein counteracts the NLS to maintain the Gag and Gag-Pol polyproteins in the cytoplasm, thereby directing unspliced RNA to the plasma membrane (By similarity).</text>
</comment>
<comment type="subcellular location">
    <molecule>Capsid protein p24</molecule>
    <subcellularLocation>
        <location evidence="7">Virion</location>
    </subcellularLocation>
</comment>
<comment type="subcellular location">
    <molecule>Nucleocapsid protein p7</molecule>
    <subcellularLocation>
        <location evidence="7">Virion</location>
    </subcellularLocation>
</comment>
<comment type="alternative products">
    <event type="ribosomal frameshifting"/>
    <isoform>
        <id>Q02843-1</id>
        <name>Gag polyprotein</name>
        <sequence type="displayed"/>
    </isoform>
    <isoform>
        <id>Q02836-1</id>
        <name>Gag-Pol polyprotein</name>
        <sequence type="external"/>
    </isoform>
    <text>Translation results in the formation of the Gag polyprotein most of the time. Ribosomal frameshifting at the gag-pol genes boundary occurs at low frequency and produces the Gag-Pol polyprotein. This strategy of translation probably allows the virus to modulate the quantity of each viral protein. Maintenance of a correct Gag to Gag-Pol ratio is essential for RNA dimerization and viral infectivity.</text>
</comment>
<comment type="domain">
    <text evidence="3">Late-budding domains (L domains) are short sequence motifs essential for viral particle budding. They recruit proteins of the host ESCRT machinery (Endosomal Sorting Complex Required for Transport) or ESCRT-associated proteins. p6-gag contains one L domain: a PTAP/PSAP motif, which interacts with the UEV domain of TSG101.</text>
</comment>
<comment type="PTM">
    <text evidence="1">Capsid protein p24 is phosphorylated.</text>
</comment>
<comment type="PTM">
    <text evidence="1">Specific enzymatic cleavages by the viral protease yield mature proteins. The polyprotein is cleaved during and after budding, this process is termed maturation (By similarity).</text>
</comment>
<comment type="miscellaneous">
    <text>This is an African green monkey isolate.</text>
</comment>
<comment type="miscellaneous">
    <molecule>Isoform Gag polyprotein</molecule>
    <text>Produced by conventional translation.</text>
</comment>
<comment type="similarity">
    <text evidence="7">Belongs to the primate lentivirus group gag polyprotein family.</text>
</comment>
<feature type="initiator methionine" description="Removed; by host" evidence="1">
    <location>
        <position position="1"/>
    </location>
</feature>
<feature type="chain" id="PRO_0000316113" description="Gag polyprotein" evidence="1">
    <location>
        <begin position="2"/>
        <end position="513"/>
    </location>
</feature>
<feature type="chain" id="PRO_0000038625" description="Matrix protein p17" evidence="1">
    <location>
        <begin position="2"/>
        <end position="135"/>
    </location>
</feature>
<feature type="chain" id="PRO_0000038626" description="Capsid protein p24" evidence="1">
    <location>
        <begin position="136"/>
        <end position="366"/>
    </location>
</feature>
<feature type="peptide" id="PRO_0000316114" description="Spacer peptide p2" evidence="1">
    <location>
        <begin position="367"/>
        <end position="379"/>
    </location>
</feature>
<feature type="chain" id="PRO_0000038627" description="Nucleocapsid protein p7" evidence="1">
    <location>
        <begin position="380" status="uncertain"/>
        <end position="432"/>
    </location>
</feature>
<feature type="peptide" id="PRO_0000316115" description="Spacer peptide p1" evidence="1">
    <location>
        <begin position="433"/>
        <end position="447"/>
    </location>
</feature>
<feature type="chain" id="PRO_0000316116" description="p6-gag" evidence="1">
    <location>
        <begin position="448"/>
        <end position="513"/>
    </location>
</feature>
<feature type="zinc finger region" description="CCHC-type 1" evidence="5">
    <location>
        <begin position="390"/>
        <end position="407"/>
    </location>
</feature>
<feature type="zinc finger region" description="CCHC-type 2" evidence="5">
    <location>
        <begin position="411"/>
        <end position="428"/>
    </location>
</feature>
<feature type="region of interest" description="Disordered" evidence="6">
    <location>
        <begin position="115"/>
        <end position="135"/>
    </location>
</feature>
<feature type="region of interest" description="Disordered" evidence="6">
    <location>
        <begin position="215"/>
        <end position="234"/>
    </location>
</feature>
<feature type="region of interest" description="Disordered" evidence="6">
    <location>
        <begin position="481"/>
        <end position="513"/>
    </location>
</feature>
<feature type="short sequence motif" description="Nuclear export signal" evidence="1">
    <location>
        <begin position="16"/>
        <end position="22"/>
    </location>
</feature>
<feature type="short sequence motif" description="Nuclear localization signal" evidence="1">
    <location>
        <begin position="26"/>
        <end position="32"/>
    </location>
</feature>
<feature type="short sequence motif" description="PTAP/PSAP motif" evidence="3">
    <location>
        <begin position="459"/>
        <end position="462"/>
    </location>
</feature>
<feature type="compositionally biased region" description="Basic and acidic residues" evidence="6">
    <location>
        <begin position="481"/>
        <end position="501"/>
    </location>
</feature>
<feature type="site" description="Cleavage; by viral protease" evidence="1">
    <location>
        <begin position="135"/>
        <end position="136"/>
    </location>
</feature>
<feature type="site" description="Cleavage; by viral protease" evidence="1">
    <location>
        <begin position="432"/>
        <end position="433"/>
    </location>
</feature>
<feature type="site" description="Cleavage; by viral protease" evidence="1">
    <location>
        <begin position="447"/>
        <end position="448"/>
    </location>
</feature>
<feature type="lipid moiety-binding region" description="N-myristoyl glycine; by host" evidence="1">
    <location>
        <position position="2"/>
    </location>
</feature>
<feature type="helix" evidence="8">
    <location>
        <begin position="469"/>
        <end position="472"/>
    </location>
</feature>
<gene>
    <name type="primary">gag</name>
</gene>
<organism>
    <name type="scientific">Simian immunodeficiency virus agm.grivet (isolate AGM gr-1)</name>
    <name type="common">SIV-agm.gri</name>
    <name type="synonym">Simian immunodeficiency virus African green monkey grivet</name>
    <dbReference type="NCBI Taxonomy" id="31684"/>
    <lineage>
        <taxon>Viruses</taxon>
        <taxon>Riboviria</taxon>
        <taxon>Pararnavirae</taxon>
        <taxon>Artverviricota</taxon>
        <taxon>Revtraviricetes</taxon>
        <taxon>Ortervirales</taxon>
        <taxon>Retroviridae</taxon>
        <taxon>Orthoretrovirinae</taxon>
        <taxon>Lentivirus</taxon>
        <taxon>Simian immunodeficiency virus</taxon>
    </lineage>
</organism>